<sequence>MPKSPPRFLNSPLSDFFIKWMSRINTWMYRRNDGEGLGGTFQKIPVALLTTTGRKTGQPRVNPLYFLRDGGRVIVAASKGGAEKNPMWYLNLKANPKVQVQIKKEVLDLTARDATDEERAEYWPQLVTMYPSYQDYQSWTDRTIPIVVCEP</sequence>
<feature type="chain" id="PRO_0000399507" description="Deazaflavin-dependent nitroreductase">
    <location>
        <begin position="1"/>
        <end position="151"/>
    </location>
</feature>
<feature type="binding site" evidence="9 10">
    <location>
        <begin position="54"/>
        <end position="56"/>
    </location>
    <ligand>
        <name>coenzyme F420-(gamma-Glu)n</name>
        <dbReference type="ChEBI" id="CHEBI:133980"/>
    </ligand>
</feature>
<feature type="binding site" evidence="9 10">
    <location>
        <begin position="60"/>
        <end position="65"/>
    </location>
    <ligand>
        <name>coenzyme F420-(gamma-Glu)n</name>
        <dbReference type="ChEBI" id="CHEBI:133980"/>
    </ligand>
</feature>
<feature type="binding site" evidence="9 10">
    <location>
        <begin position="76"/>
        <end position="79"/>
    </location>
    <ligand>
        <name>coenzyme F420-(gamma-Glu)n</name>
        <dbReference type="ChEBI" id="CHEBI:133980"/>
    </ligand>
</feature>
<feature type="binding site" evidence="9 10">
    <location>
        <begin position="87"/>
        <end position="91"/>
    </location>
    <ligand>
        <name>coenzyme F420-(gamma-Glu)n</name>
        <dbReference type="ChEBI" id="CHEBI:133980"/>
    </ligand>
</feature>
<feature type="binding site" evidence="9 10">
    <location>
        <position position="133"/>
    </location>
    <ligand>
        <name>coenzyme F420-(gamma-Glu)n</name>
        <dbReference type="ChEBI" id="CHEBI:133980"/>
    </ligand>
</feature>
<feature type="mutagenesis site" description="Loss of PA-824 and menadione reductase activity." evidence="5 6">
    <original>Y</original>
    <variation>A</variation>
    <variation>L</variation>
    <location>
        <position position="65"/>
    </location>
</feature>
<feature type="mutagenesis site" description="Loss of PA-824 reductase activity." evidence="5">
    <original>A</original>
    <variation>G</variation>
    <location>
        <position position="76"/>
    </location>
</feature>
<feature type="mutagenesis site" description="Loss of PA-824 reductase activity." evidence="5">
    <original>S</original>
    <variation>A</variation>
    <location>
        <position position="78"/>
    </location>
</feature>
<feature type="mutagenesis site" description="Loss of PA-824 reductase activity." evidence="5">
    <original>K</original>
    <variation>L</variation>
    <location>
        <position position="79"/>
    </location>
</feature>
<feature type="mutagenesis site" description="Loss of PA-824 reductase activity." evidence="5">
    <original>Y</original>
    <variation>A</variation>
    <variation>L</variation>
    <location>
        <position position="130"/>
    </location>
</feature>
<feature type="mutagenesis site" description="Loss of PA-824 reductase activity." evidence="5">
    <original>Y</original>
    <variation>A</variation>
    <variation>F</variation>
    <variation>L</variation>
    <location>
        <position position="133"/>
    </location>
</feature>
<feature type="mutagenesis site" description="Loss of PA-824 reductase activity." evidence="5">
    <original>Y</original>
    <variation>L</variation>
    <variation>V</variation>
    <location>
        <position position="136"/>
    </location>
</feature>
<feature type="mutagenesis site" description="Loss of PA-824 reductase activity." evidence="5">
    <original>R</original>
    <variation>A</variation>
    <variation>L</variation>
    <location>
        <position position="142"/>
    </location>
</feature>
<feature type="mutagenesis site" description="Loss of PA-824 reductase activity." evidence="5">
    <original>I</original>
    <variation>A</variation>
    <variation>G</variation>
    <location>
        <position position="144"/>
    </location>
</feature>
<feature type="strand" evidence="11">
    <location>
        <begin position="47"/>
        <end position="52"/>
    </location>
</feature>
<feature type="turn" evidence="11">
    <location>
        <begin position="54"/>
        <end position="56"/>
    </location>
</feature>
<feature type="strand" evidence="11">
    <location>
        <begin position="58"/>
        <end position="69"/>
    </location>
</feature>
<feature type="strand" evidence="11">
    <location>
        <begin position="72"/>
        <end position="76"/>
    </location>
</feature>
<feature type="helix" evidence="11">
    <location>
        <begin position="81"/>
        <end position="83"/>
    </location>
</feature>
<feature type="helix" evidence="11">
    <location>
        <begin position="87"/>
        <end position="94"/>
    </location>
</feature>
<feature type="strand" evidence="11">
    <location>
        <begin position="97"/>
        <end position="102"/>
    </location>
</feature>
<feature type="strand" evidence="11">
    <location>
        <begin position="105"/>
        <end position="113"/>
    </location>
</feature>
<feature type="helix" evidence="11">
    <location>
        <begin position="116"/>
        <end position="129"/>
    </location>
</feature>
<feature type="helix" evidence="12">
    <location>
        <begin position="131"/>
        <end position="135"/>
    </location>
</feature>
<feature type="helix" evidence="11">
    <location>
        <begin position="138"/>
        <end position="140"/>
    </location>
</feature>
<feature type="strand" evidence="11">
    <location>
        <begin position="146"/>
        <end position="150"/>
    </location>
</feature>
<name>DDN_MYCTU</name>
<keyword id="KW-0002">3D-structure</keyword>
<keyword id="KW-1003">Cell membrane</keyword>
<keyword id="KW-0472">Membrane</keyword>
<keyword id="KW-0560">Oxidoreductase</keyword>
<keyword id="KW-1185">Reference proteome</keyword>
<proteinExistence type="evidence at protein level"/>
<protein>
    <recommendedName>
        <fullName evidence="7">Deazaflavin-dependent nitroreductase</fullName>
        <ecNumber evidence="3 4">1.-.-.-</ecNumber>
    </recommendedName>
    <alternativeName>
        <fullName evidence="7">F420H(2)-dependent quinone reductase Ddn</fullName>
        <shortName evidence="7">Fqr</shortName>
        <ecNumber evidence="6">1.1.98.-</ecNumber>
    </alternativeName>
</protein>
<comment type="function">
    <text evidence="4 6">Involved in a F420-dependent anti-oxidant mechanism that protects M.tuberculosis against oxidative stress and bactericidal agents. Catalyzes the F420H(2)-dependent two-electron reduction of quinones to dihydroquinones, thereby preventing the formation of cytotoxic semiquinones obtained by the one-electron reduction pathway (PubMed:23240649). In vitro, catalyzes the reduction of both benzoquinone and naphthoquinone analogs; since menaquinone is the sole quinone electron carrier in the respiratory chain in M.tuberculosis, the physiological electron acceptor for Fqr-mediated F420H(2) oxidation is therefore likely to be the endogenous menaquinone found in the membrane fraction of M.tuberculosis (PubMed:23240649). Is able to use F420 species with two and five glutamate residues in its polyglutamate tail (PubMed:22023140). Cannot use NADH or NADPH instead of F420H(2) as the electron donor (PubMed:23240649).</text>
</comment>
<comment type="function">
    <text evidence="2 3 4 5">Is involved in the bioreductive activation of bicyclic 4-nitroimidazole prodrugs such as PA-824 and delamanid developed for anti-tuberculosis therapy against both replicating and persistent bacteria. It converts PA-824 into three primary metabolites resulting from reduction of the imidazole ring at C-3; the major one is the corresponding des-nitroimidazole that generates lethal reactive nitrogen species, including nitric oxide (NO), which appears to be responsible for the anaerobic killing activity. Ddn uses the reduced F420 produced by FGD1 to activate PA-824. Delamanid (OPC-67683) is also reduced by Ddn to its des-nitro form.</text>
</comment>
<comment type="catalytic activity">
    <reaction evidence="6">
        <text>oxidized coenzyme F420-(gamma-L-Glu)(n) + a quinol + H(+) = reduced coenzyme F420-(gamma-L-Glu)(n) + a quinone</text>
        <dbReference type="Rhea" id="RHEA:39663"/>
        <dbReference type="Rhea" id="RHEA-COMP:12939"/>
        <dbReference type="Rhea" id="RHEA-COMP:14378"/>
        <dbReference type="ChEBI" id="CHEBI:15378"/>
        <dbReference type="ChEBI" id="CHEBI:24646"/>
        <dbReference type="ChEBI" id="CHEBI:132124"/>
        <dbReference type="ChEBI" id="CHEBI:133980"/>
        <dbReference type="ChEBI" id="CHEBI:139511"/>
    </reaction>
</comment>
<comment type="biophysicochemical properties">
    <kinetics>
        <KM evidence="6">3.4 uM for menadione</KM>
        <KM evidence="6">2.17 uM for plumbagin</KM>
        <KM evidence="6">2.23 uM for 1,4-naphthoquinone</KM>
        <KM evidence="6">2.21 uM for 2,3-dimethyl-naphthoquinone</KM>
        <KM evidence="6">12.35 uM for Co-Q(0)</KM>
        <KM evidence="6">10.12 uM for Co-Q(1)</KM>
        <KM evidence="6">3.14 uM for Co-Q(2)</KM>
        <KM evidence="4">26 uM for reduced F(420)-2</KM>
        <KM evidence="4">29 uM for reduced F(420)-5</KM>
        <KM evidence="4">28.6 uM for PA-824</KM>
        <KM evidence="4">207.2 uM for (S)-CGI-17341</KM>
        <KM evidence="4">123.2 uM for (R)-CGI-17341</KM>
        <KM evidence="4">67.8 uM for (S)-phenyloxazole</KM>
        <KM evidence="4">83.6 uM for (R)-phenyloxazole</KM>
        <KM evidence="4">12.9 uM for aza-PA-824</KM>
        <text evidence="4 6">kcat is 17.7 min(-1) for the reduction of menadione. kcat is 5.03 min(-1) for the reduction of plumbagin. kcat is 17.2 min(-1) for the reduction of 1,4-naphthoquinone. kcat is 5.37 min(-1) for the reduction of 2,3-dimethyl-naphthoquinone. kcat is 1.23 min(-1) for the reduction of Co-Q(0). kcat is 2.15 min(-1) for the reduction of Co-Q(1). kcat is 5.43 min(-1) for the reduction of Co-Q(2) (PubMed:23240649). kcat is 4.7 min(-1) for the reduction of PA-824. kcat is 2.4 min(-1) for the reduction of (S)-CGI-17341. kcat is 2.2 min(-1) for the reduction of (R)-CGI-17341. kcat is 2.7 min(-1) for the reduction of (S)-phenyloxazole. kcat is 4.8 min(-1) for the reduction of (R)-phenyloxazole. kcat is 1.6 min(-1) for the reduction of aza-PA-824 (PubMed:22023140). Is not able to reduce the enantiomer (R)-PA-824 (the drug PA-824 is defined as the (S) isomer), and metronidazole (Mtz) (PubMed:22023140).</text>
    </kinetics>
    <phDependence>
        <text evidence="4">Optimum pH is 7.0-8.0.</text>
    </phDependence>
</comment>
<comment type="subcellular location">
    <subcellularLocation>
        <location evidence="1">Cell membrane</location>
        <topology evidence="1">Peripheral membrane protein</topology>
    </subcellularLocation>
</comment>
<comment type="similarity">
    <text evidence="8">Belongs to the F420H(2)-dependent quinone reductase family.</text>
</comment>
<dbReference type="EC" id="1.-.-.-" evidence="3 4"/>
<dbReference type="EC" id="1.1.98.-" evidence="6"/>
<dbReference type="EMBL" id="AL123456">
    <property type="protein sequence ID" value="CCP46369.1"/>
    <property type="molecule type" value="Genomic_DNA"/>
</dbReference>
<dbReference type="PIR" id="D70677">
    <property type="entry name" value="D70677"/>
</dbReference>
<dbReference type="RefSeq" id="NP_218064.1">
    <property type="nucleotide sequence ID" value="NC_000962.3"/>
</dbReference>
<dbReference type="RefSeq" id="WP_003419309.1">
    <property type="nucleotide sequence ID" value="NZ_NVQJ01000014.1"/>
</dbReference>
<dbReference type="PDB" id="3R5L">
    <property type="method" value="X-ray"/>
    <property type="resolution" value="1.55 A"/>
    <property type="chains" value="A=31-151"/>
</dbReference>
<dbReference type="PDB" id="3R5P">
    <property type="method" value="X-ray"/>
    <property type="resolution" value="1.85 A"/>
    <property type="chains" value="A=34-151"/>
</dbReference>
<dbReference type="PDB" id="3R5R">
    <property type="method" value="X-ray"/>
    <property type="resolution" value="2.10 A"/>
    <property type="chains" value="A/B/C/D/E=41-151"/>
</dbReference>
<dbReference type="PDB" id="3R5W">
    <property type="method" value="X-ray"/>
    <property type="resolution" value="1.79 A"/>
    <property type="chains" value="A/B/C/D/E/K/L/M/N/O=41-151"/>
</dbReference>
<dbReference type="PDBsum" id="3R5L"/>
<dbReference type="PDBsum" id="3R5P"/>
<dbReference type="PDBsum" id="3R5R"/>
<dbReference type="PDBsum" id="3R5W"/>
<dbReference type="SMR" id="P9WP15"/>
<dbReference type="STRING" id="83332.Rv3547"/>
<dbReference type="ChEMBL" id="CHEMBL5663"/>
<dbReference type="DrugBank" id="DB11637">
    <property type="generic name" value="Delamanid"/>
</dbReference>
<dbReference type="DrugBank" id="DB05154">
    <property type="generic name" value="Pretomanid"/>
</dbReference>
<dbReference type="PaxDb" id="83332-Rv3547"/>
<dbReference type="DNASU" id="887496"/>
<dbReference type="GeneID" id="45427531"/>
<dbReference type="GeneID" id="887496"/>
<dbReference type="KEGG" id="mtu:Rv3547"/>
<dbReference type="KEGG" id="mtv:RVBD_3547"/>
<dbReference type="TubercuList" id="Rv3547"/>
<dbReference type="eggNOG" id="COG0748">
    <property type="taxonomic scope" value="Bacteria"/>
</dbReference>
<dbReference type="InParanoid" id="P9WP15"/>
<dbReference type="OrthoDB" id="8225825at2"/>
<dbReference type="PhylomeDB" id="P9WP15"/>
<dbReference type="EvolutionaryTrace" id="P9WP15"/>
<dbReference type="PRO" id="PR:P9WP15"/>
<dbReference type="Proteomes" id="UP000001584">
    <property type="component" value="Chromosome"/>
</dbReference>
<dbReference type="GO" id="GO:0009274">
    <property type="term" value="C:peptidoglycan-based cell wall"/>
    <property type="evidence" value="ECO:0007005"/>
    <property type="project" value="UniProtKB"/>
</dbReference>
<dbReference type="GO" id="GO:0005886">
    <property type="term" value="C:plasma membrane"/>
    <property type="evidence" value="ECO:0007005"/>
    <property type="project" value="MTBBASE"/>
</dbReference>
<dbReference type="GO" id="GO:0070967">
    <property type="term" value="F:coenzyme F420 binding"/>
    <property type="evidence" value="ECO:0000315"/>
    <property type="project" value="MTBBASE"/>
</dbReference>
<dbReference type="GO" id="GO:0016491">
    <property type="term" value="F:oxidoreductase activity"/>
    <property type="evidence" value="ECO:0007669"/>
    <property type="project" value="UniProtKB-KW"/>
</dbReference>
<dbReference type="FunFam" id="2.30.110.10:FF:000027">
    <property type="entry name" value="Deazaflavin-dependent nitroreductase ddn"/>
    <property type="match status" value="1"/>
</dbReference>
<dbReference type="Gene3D" id="2.30.110.10">
    <property type="entry name" value="Electron Transport, Fmn-binding Protein, Chain A"/>
    <property type="match status" value="1"/>
</dbReference>
<dbReference type="InterPro" id="IPR004378">
    <property type="entry name" value="F420H2_quin_Rdtase"/>
</dbReference>
<dbReference type="InterPro" id="IPR012349">
    <property type="entry name" value="Split_barrel_FMN-bd"/>
</dbReference>
<dbReference type="NCBIfam" id="TIGR00026">
    <property type="entry name" value="hi_GC_TIGR00026"/>
    <property type="match status" value="1"/>
</dbReference>
<dbReference type="PANTHER" id="PTHR39428:SF3">
    <property type="entry name" value="DEAZAFLAVIN-DEPENDENT NITROREDUCTASE"/>
    <property type="match status" value="1"/>
</dbReference>
<dbReference type="PANTHER" id="PTHR39428">
    <property type="entry name" value="F420H(2)-DEPENDENT QUINONE REDUCTASE RV1261C"/>
    <property type="match status" value="1"/>
</dbReference>
<dbReference type="Pfam" id="PF04075">
    <property type="entry name" value="F420H2_quin_red"/>
    <property type="match status" value="1"/>
</dbReference>
<dbReference type="SUPFAM" id="SSF50475">
    <property type="entry name" value="FMN-binding split barrel"/>
    <property type="match status" value="1"/>
</dbReference>
<gene>
    <name evidence="7" type="primary">ddn</name>
    <name type="ordered locus">Rv3547</name>
</gene>
<organism>
    <name type="scientific">Mycobacterium tuberculosis (strain ATCC 25618 / H37Rv)</name>
    <dbReference type="NCBI Taxonomy" id="83332"/>
    <lineage>
        <taxon>Bacteria</taxon>
        <taxon>Bacillati</taxon>
        <taxon>Actinomycetota</taxon>
        <taxon>Actinomycetes</taxon>
        <taxon>Mycobacteriales</taxon>
        <taxon>Mycobacteriaceae</taxon>
        <taxon>Mycobacterium</taxon>
        <taxon>Mycobacterium tuberculosis complex</taxon>
    </lineage>
</organism>
<evidence type="ECO:0000269" key="1">
    <source>
    </source>
</evidence>
<evidence type="ECO:0000269" key="2">
    <source>
    </source>
</evidence>
<evidence type="ECO:0000269" key="3">
    <source>
    </source>
</evidence>
<evidence type="ECO:0000269" key="4">
    <source>
    </source>
</evidence>
<evidence type="ECO:0000269" key="5">
    <source>
    </source>
</evidence>
<evidence type="ECO:0000269" key="6">
    <source>
    </source>
</evidence>
<evidence type="ECO:0000303" key="7">
    <source>
    </source>
</evidence>
<evidence type="ECO:0000305" key="8"/>
<evidence type="ECO:0000305" key="9">
    <source>
    </source>
</evidence>
<evidence type="ECO:0007744" key="10">
    <source>
        <dbReference type="PDB" id="3R5W"/>
    </source>
</evidence>
<evidence type="ECO:0007829" key="11">
    <source>
        <dbReference type="PDB" id="3R5L"/>
    </source>
</evidence>
<evidence type="ECO:0007829" key="12">
    <source>
        <dbReference type="PDB" id="3R5P"/>
    </source>
</evidence>
<accession>P9WP15</accession>
<accession>L0TD35</accession>
<accession>P71854</accession>
<accession>Q7D5B2</accession>
<reference key="1">
    <citation type="journal article" date="1998" name="Nature">
        <title>Deciphering the biology of Mycobacterium tuberculosis from the complete genome sequence.</title>
        <authorList>
            <person name="Cole S.T."/>
            <person name="Brosch R."/>
            <person name="Parkhill J."/>
            <person name="Garnier T."/>
            <person name="Churcher C.M."/>
            <person name="Harris D.E."/>
            <person name="Gordon S.V."/>
            <person name="Eiglmeier K."/>
            <person name="Gas S."/>
            <person name="Barry C.E. III"/>
            <person name="Tekaia F."/>
            <person name="Badcock K."/>
            <person name="Basham D."/>
            <person name="Brown D."/>
            <person name="Chillingworth T."/>
            <person name="Connor R."/>
            <person name="Davies R.M."/>
            <person name="Devlin K."/>
            <person name="Feltwell T."/>
            <person name="Gentles S."/>
            <person name="Hamlin N."/>
            <person name="Holroyd S."/>
            <person name="Hornsby T."/>
            <person name="Jagels K."/>
            <person name="Krogh A."/>
            <person name="McLean J."/>
            <person name="Moule S."/>
            <person name="Murphy L.D."/>
            <person name="Oliver S."/>
            <person name="Osborne J."/>
            <person name="Quail M.A."/>
            <person name="Rajandream M.A."/>
            <person name="Rogers J."/>
            <person name="Rutter S."/>
            <person name="Seeger K."/>
            <person name="Skelton S."/>
            <person name="Squares S."/>
            <person name="Squares R."/>
            <person name="Sulston J.E."/>
            <person name="Taylor K."/>
            <person name="Whitehead S."/>
            <person name="Barrell B.G."/>
        </authorList>
    </citation>
    <scope>NUCLEOTIDE SEQUENCE [LARGE SCALE GENOMIC DNA]</scope>
    <source>
        <strain>ATCC 25618 / H37Rv</strain>
    </source>
</reference>
<reference key="2">
    <citation type="journal article" date="2005" name="Microbiology">
        <title>Immunogenic membrane-associated proteins of Mycobacterium tuberculosis revealed by proteomics.</title>
        <authorList>
            <person name="Sinha S."/>
            <person name="Kosalai K."/>
            <person name="Arora S."/>
            <person name="Namane A."/>
            <person name="Sharma P."/>
            <person name="Gaikwad A.N."/>
            <person name="Brodin P."/>
            <person name="Cole S.T."/>
        </authorList>
    </citation>
    <scope>IDENTIFICATION BY MASS SPECTROMETRY</scope>
    <scope>SUBCELLULAR LOCATION</scope>
    <source>
        <strain>H37Rv</strain>
    </source>
</reference>
<reference key="3">
    <citation type="journal article" date="2006" name="Proc. Natl. Acad. Sci. U.S.A.">
        <title>Identification of a nitroimidazo-oxazine-specific protein involved in PA-824 resistance in Mycobacterium tuberculosis.</title>
        <authorList>
            <person name="Manjunatha U.H."/>
            <person name="Boshoff H."/>
            <person name="Dowd C.S."/>
            <person name="Zhang L."/>
            <person name="Albert T.J."/>
            <person name="Norton J.E."/>
            <person name="Daniels L."/>
            <person name="Dick T."/>
            <person name="Pang S.S."/>
            <person name="Barry C.E. III"/>
        </authorList>
    </citation>
    <scope>FUNCTION IN THE ACTIVATION OF PA-824</scope>
</reference>
<reference key="4">
    <citation type="journal article" date="2008" name="Science">
        <title>PA-824 kills nonreplicating Mycobacterium tuberculosis by intracellular NO release.</title>
        <authorList>
            <person name="Singh R."/>
            <person name="Manjunatha U."/>
            <person name="Boshoff H.I."/>
            <person name="Ha Y.H."/>
            <person name="Niyomrattanakit P."/>
            <person name="Ledwidge R."/>
            <person name="Dowd C.S."/>
            <person name="Lee I.Y."/>
            <person name="Kim P."/>
            <person name="Zhang L."/>
            <person name="Kang S."/>
            <person name="Keller T.H."/>
            <person name="Jiricek J."/>
            <person name="Barry C.E. III"/>
        </authorList>
    </citation>
    <scope>FUNCTION AS A F420-DEPENDENT NITROREDUCTASE</scope>
    <scope>CATALYTIC ACTIVITY</scope>
</reference>
<reference key="5">
    <citation type="journal article" date="2011" name="Mol. Cell. Proteomics">
        <title>Proteogenomic analysis of Mycobacterium tuberculosis by high resolution mass spectrometry.</title>
        <authorList>
            <person name="Kelkar D.S."/>
            <person name="Kumar D."/>
            <person name="Kumar P."/>
            <person name="Balakrishnan L."/>
            <person name="Muthusamy B."/>
            <person name="Yadav A.K."/>
            <person name="Shrivastava P."/>
            <person name="Marimuthu A."/>
            <person name="Anand S."/>
            <person name="Sundaram H."/>
            <person name="Kingsbury R."/>
            <person name="Harsha H.C."/>
            <person name="Nair B."/>
            <person name="Prasad T.S."/>
            <person name="Chauhan D.S."/>
            <person name="Katoch K."/>
            <person name="Katoch V.M."/>
            <person name="Kumar P."/>
            <person name="Chaerkady R."/>
            <person name="Ramachandran S."/>
            <person name="Dash D."/>
            <person name="Pandey A."/>
        </authorList>
    </citation>
    <scope>IDENTIFICATION BY MASS SPECTROMETRY [LARGE SCALE ANALYSIS]</scope>
    <source>
        <strain>ATCC 25618 / H37Rv</strain>
    </source>
</reference>
<reference key="6">
    <citation type="journal article" date="2012" name="FEBS J.">
        <title>Substrate specificity of the deazaflavin-dependent nitroreductase from Mycobacterium tuberculosis responsible for the bioreductive activation of bicyclic nitroimidazoles.</title>
        <authorList>
            <person name="Gurumurthy M."/>
            <person name="Mukherjee T."/>
            <person name="Dowd C.S."/>
            <person name="Singh R."/>
            <person name="Niyomrattanakit P."/>
            <person name="Tay J.A."/>
            <person name="Nayyar A."/>
            <person name="Lee Y.S."/>
            <person name="Cherian J."/>
            <person name="Boshoff H.I."/>
            <person name="Dick T."/>
            <person name="Barry C.E. III"/>
            <person name="Manjunatha U.H."/>
        </authorList>
    </citation>
    <scope>FUNCTION</scope>
    <scope>CATALYTIC ACTIVITY</scope>
    <scope>SUBSTRATE SPECIFICITY</scope>
    <scope>BIOPHYSICOCHEMICAL PROPERTIES</scope>
</reference>
<reference key="7">
    <citation type="journal article" date="2013" name="Mol. Microbiol.">
        <title>A novel F(420)-dependent anti-oxidant mechanism protects Mycobacterium tuberculosis against oxidative stress and bactericidal agents.</title>
        <authorList>
            <person name="Gurumurthy M."/>
            <person name="Rao M."/>
            <person name="Mukherjee T."/>
            <person name="Rao S.P."/>
            <person name="Boshoff H.I."/>
            <person name="Dick T."/>
            <person name="Barry C.E. III"/>
            <person name="Manjunatha U.H."/>
        </authorList>
    </citation>
    <scope>FUNCTION AS A F420-DEPENDENT QUINONE REDUCTASE</scope>
    <scope>CATALYTIC ACTIVITY</scope>
    <scope>BIOPHYSICOCHEMICAL PROPERTIES</scope>
    <scope>SUBSTRATE SPECIFICITY</scope>
    <scope>MUTAGENESIS OF TYR-65</scope>
    <source>
        <strain>ATCC 27294 / TMC 102 / H37Rv</strain>
    </source>
</reference>
<reference key="8">
    <citation type="journal article" date="2012" name="Structure">
        <title>Structure of Ddn, the deazaflavin-dependent nitroreductase from Mycobacterium tuberculosis involved in bioreductive activation of PA-824.</title>
        <authorList>
            <person name="Cellitti S.E."/>
            <person name="Shaffer J."/>
            <person name="Jones D.H."/>
            <person name="Mukherjee T."/>
            <person name="Gurumurthy M."/>
            <person name="Bursulaya B."/>
            <person name="Boshoff H.I."/>
            <person name="Choi I."/>
            <person name="Nayyar A."/>
            <person name="Lee Y.S."/>
            <person name="Cherian J."/>
            <person name="Niyomrattanakit P."/>
            <person name="Dick T."/>
            <person name="Manjunatha U.H."/>
            <person name="Barry C.E. III"/>
            <person name="Spraggon G."/>
            <person name="Geierstanger B.H."/>
        </authorList>
    </citation>
    <scope>X-RAY CRYSTALLOGRAPHY (1.55 ANGSTROMS) OF 31-151 OF APOENZYME AND IN COMPLEX WITH COENZYME F420</scope>
    <scope>3D-STRUCTURE MODELING</scope>
    <scope>FUNCTION</scope>
    <scope>MUTAGENESIS OF TYR-65; ALA-76; SER-78; LYS-79; TYR-130; TYR-133; TYR-136; ARG-142 AND ILE-144</scope>
</reference>